<sequence length="475" mass="52700">MSPQTETKTSAGFKAGVKDYRLTYYTPEYKTKDTDILAAFRVTPQPGVPPEEAGAAVAAESSTGTWTTVWTDGLTSLDRYKGRCYDIEPVAGEENQFIAYVAYPLDLFEEGSVTNLFTSIVGNVFGFKALRALRLEDLRIPPAYTKTFQGPPHGIQVERDKLNKYGRPLLGCTIKPKLGLSAKNYGRAVYECLRGGLDFTKDDENVNSQPFMRWRDRFLFVAEAIYKSQAETGEIKGHYLNATAGTCEEMLKRAQCARELGMPIVMHDYLTGGFTANTTLAHYCRDNGLLLHIHRAMHAVLDRQKNHGMHFRVLAKALRLSGGDHVHSGTVVGKLEGEREVTLGFVDLLRDDYIEKDRSRGVYFTQDWVSLPGVLPVASGGIHVWHMPALTEIFGDDSVLQFGGGTLGHPWGNAPGAVANRVALEACVQARNEGRDLAREGNEIIREAAKWSPELAAACEVWKEIKFEFETIDTL</sequence>
<comment type="function">
    <text evidence="1">RuBisCO catalyzes two reactions: the carboxylation of D-ribulose 1,5-bisphosphate, the primary event in carbon dioxide fixation, as well as the oxidative fragmentation of the pentose substrate in the photorespiration process. Both reactions occur simultaneously and in competition at the same active site.</text>
</comment>
<comment type="catalytic activity">
    <reaction evidence="1">
        <text>2 (2R)-3-phosphoglycerate + 2 H(+) = D-ribulose 1,5-bisphosphate + CO2 + H2O</text>
        <dbReference type="Rhea" id="RHEA:23124"/>
        <dbReference type="ChEBI" id="CHEBI:15377"/>
        <dbReference type="ChEBI" id="CHEBI:15378"/>
        <dbReference type="ChEBI" id="CHEBI:16526"/>
        <dbReference type="ChEBI" id="CHEBI:57870"/>
        <dbReference type="ChEBI" id="CHEBI:58272"/>
        <dbReference type="EC" id="4.1.1.39"/>
    </reaction>
</comment>
<comment type="catalytic activity">
    <reaction evidence="1">
        <text>D-ribulose 1,5-bisphosphate + O2 = 2-phosphoglycolate + (2R)-3-phosphoglycerate + 2 H(+)</text>
        <dbReference type="Rhea" id="RHEA:36631"/>
        <dbReference type="ChEBI" id="CHEBI:15378"/>
        <dbReference type="ChEBI" id="CHEBI:15379"/>
        <dbReference type="ChEBI" id="CHEBI:57870"/>
        <dbReference type="ChEBI" id="CHEBI:58033"/>
        <dbReference type="ChEBI" id="CHEBI:58272"/>
    </reaction>
</comment>
<comment type="cofactor">
    <cofactor evidence="1">
        <name>Mg(2+)</name>
        <dbReference type="ChEBI" id="CHEBI:18420"/>
    </cofactor>
    <text evidence="1">Binds 1 Mg(2+) ion per subunit.</text>
</comment>
<comment type="subunit">
    <text evidence="1">Heterohexadecamer of 8 large chains and 8 small chains; disulfide-linked. The disulfide link is formed within the large subunit homodimers.</text>
</comment>
<comment type="subcellular location">
    <subcellularLocation>
        <location>Plastid</location>
        <location>Chloroplast</location>
    </subcellularLocation>
</comment>
<comment type="PTM">
    <text evidence="1">The disulfide bond which can form in the large chain dimeric partners within the hexadecamer appears to be associated with oxidative stress and protein turnover.</text>
</comment>
<comment type="miscellaneous">
    <text evidence="1">The basic functional RuBisCO is composed of a large chain homodimer in a 'head-to-tail' conformation. In form I RuBisCO this homodimer is arranged in a barrel-like tetramer with the small subunits forming a tetrameric 'cap' on each end of the 'barrel'.</text>
</comment>
<comment type="similarity">
    <text evidence="1">Belongs to the RuBisCO large chain family. Type I subfamily.</text>
</comment>
<geneLocation type="chloroplast"/>
<feature type="propeptide" id="PRO_0000251418" evidence="1">
    <location>
        <begin position="1"/>
        <end position="2"/>
    </location>
</feature>
<feature type="chain" id="PRO_0000251419" description="Ribulose bisphosphate carboxylase large chain">
    <location>
        <begin position="3"/>
        <end position="475"/>
    </location>
</feature>
<feature type="active site" description="Proton acceptor" evidence="1">
    <location>
        <position position="175"/>
    </location>
</feature>
<feature type="active site" description="Proton acceptor" evidence="1">
    <location>
        <position position="294"/>
    </location>
</feature>
<feature type="binding site" description="in homodimeric partner" evidence="1">
    <location>
        <position position="123"/>
    </location>
    <ligand>
        <name>substrate</name>
    </ligand>
</feature>
<feature type="binding site" evidence="1">
    <location>
        <position position="173"/>
    </location>
    <ligand>
        <name>substrate</name>
    </ligand>
</feature>
<feature type="binding site" evidence="1">
    <location>
        <position position="177"/>
    </location>
    <ligand>
        <name>substrate</name>
    </ligand>
</feature>
<feature type="binding site" description="via carbamate group" evidence="1">
    <location>
        <position position="201"/>
    </location>
    <ligand>
        <name>Mg(2+)</name>
        <dbReference type="ChEBI" id="CHEBI:18420"/>
    </ligand>
</feature>
<feature type="binding site" evidence="1">
    <location>
        <position position="203"/>
    </location>
    <ligand>
        <name>Mg(2+)</name>
        <dbReference type="ChEBI" id="CHEBI:18420"/>
    </ligand>
</feature>
<feature type="binding site" evidence="1">
    <location>
        <position position="204"/>
    </location>
    <ligand>
        <name>Mg(2+)</name>
        <dbReference type="ChEBI" id="CHEBI:18420"/>
    </ligand>
</feature>
<feature type="binding site" evidence="1">
    <location>
        <position position="295"/>
    </location>
    <ligand>
        <name>substrate</name>
    </ligand>
</feature>
<feature type="binding site" evidence="1">
    <location>
        <position position="327"/>
    </location>
    <ligand>
        <name>substrate</name>
    </ligand>
</feature>
<feature type="binding site" evidence="1">
    <location>
        <position position="379"/>
    </location>
    <ligand>
        <name>substrate</name>
    </ligand>
</feature>
<feature type="site" description="Transition state stabilizer" evidence="1">
    <location>
        <position position="334"/>
    </location>
</feature>
<feature type="modified residue" description="N-acetylproline" evidence="1">
    <location>
        <position position="3"/>
    </location>
</feature>
<feature type="modified residue" description="N6,N6,N6-trimethyllysine" evidence="1">
    <location>
        <position position="14"/>
    </location>
</feature>
<feature type="modified residue" description="N6-carboxylysine" evidence="1">
    <location>
        <position position="201"/>
    </location>
</feature>
<feature type="disulfide bond" description="Interchain; in linked form" evidence="1">
    <location>
        <position position="247"/>
    </location>
</feature>
<reference key="1">
    <citation type="journal article" date="2006" name="Mol. Biol. Evol.">
        <title>The chloroplast genome sequence of Chara vulgaris sheds new light into the closest green algal relatives of land plants.</title>
        <authorList>
            <person name="Turmel M."/>
            <person name="Otis C."/>
            <person name="Lemieux C."/>
        </authorList>
    </citation>
    <scope>NUCLEOTIDE SEQUENCE [LARGE SCALE GENOMIC DNA]</scope>
</reference>
<evidence type="ECO:0000255" key="1">
    <source>
        <dbReference type="HAMAP-Rule" id="MF_01338"/>
    </source>
</evidence>
<gene>
    <name evidence="1" type="primary">rbcL</name>
</gene>
<organism>
    <name type="scientific">Chara vulgaris</name>
    <name type="common">Common stonewort</name>
    <dbReference type="NCBI Taxonomy" id="55564"/>
    <lineage>
        <taxon>Eukaryota</taxon>
        <taxon>Viridiplantae</taxon>
        <taxon>Streptophyta</taxon>
        <taxon>Charophyceae</taxon>
        <taxon>Charales</taxon>
        <taxon>Characeae</taxon>
        <taxon>Chara</taxon>
    </lineage>
</organism>
<proteinExistence type="inferred from homology"/>
<keyword id="KW-0007">Acetylation</keyword>
<keyword id="KW-0113">Calvin cycle</keyword>
<keyword id="KW-0120">Carbon dioxide fixation</keyword>
<keyword id="KW-0150">Chloroplast</keyword>
<keyword id="KW-1015">Disulfide bond</keyword>
<keyword id="KW-0456">Lyase</keyword>
<keyword id="KW-0460">Magnesium</keyword>
<keyword id="KW-0479">Metal-binding</keyword>
<keyword id="KW-0488">Methylation</keyword>
<keyword id="KW-0503">Monooxygenase</keyword>
<keyword id="KW-0560">Oxidoreductase</keyword>
<keyword id="KW-0601">Photorespiration</keyword>
<keyword id="KW-0602">Photosynthesis</keyword>
<keyword id="KW-0934">Plastid</keyword>
<dbReference type="EC" id="4.1.1.39" evidence="1"/>
<dbReference type="EMBL" id="DQ229107">
    <property type="protein sequence ID" value="ABA61952.1"/>
    <property type="molecule type" value="Genomic_DNA"/>
</dbReference>
<dbReference type="RefSeq" id="YP_635747.1">
    <property type="nucleotide sequence ID" value="NC_008097.1"/>
</dbReference>
<dbReference type="SMR" id="Q1ACK0"/>
<dbReference type="GeneID" id="4100318"/>
<dbReference type="GO" id="GO:0009507">
    <property type="term" value="C:chloroplast"/>
    <property type="evidence" value="ECO:0007669"/>
    <property type="project" value="UniProtKB-SubCell"/>
</dbReference>
<dbReference type="GO" id="GO:0000287">
    <property type="term" value="F:magnesium ion binding"/>
    <property type="evidence" value="ECO:0007669"/>
    <property type="project" value="UniProtKB-UniRule"/>
</dbReference>
<dbReference type="GO" id="GO:0004497">
    <property type="term" value="F:monooxygenase activity"/>
    <property type="evidence" value="ECO:0007669"/>
    <property type="project" value="UniProtKB-KW"/>
</dbReference>
<dbReference type="GO" id="GO:0016984">
    <property type="term" value="F:ribulose-bisphosphate carboxylase activity"/>
    <property type="evidence" value="ECO:0007669"/>
    <property type="project" value="UniProtKB-UniRule"/>
</dbReference>
<dbReference type="GO" id="GO:0009853">
    <property type="term" value="P:photorespiration"/>
    <property type="evidence" value="ECO:0007669"/>
    <property type="project" value="UniProtKB-KW"/>
</dbReference>
<dbReference type="GO" id="GO:0019253">
    <property type="term" value="P:reductive pentose-phosphate cycle"/>
    <property type="evidence" value="ECO:0007669"/>
    <property type="project" value="UniProtKB-UniRule"/>
</dbReference>
<dbReference type="CDD" id="cd08212">
    <property type="entry name" value="RuBisCO_large_I"/>
    <property type="match status" value="1"/>
</dbReference>
<dbReference type="FunFam" id="3.20.20.110:FF:000001">
    <property type="entry name" value="Ribulose bisphosphate carboxylase large chain"/>
    <property type="match status" value="1"/>
</dbReference>
<dbReference type="FunFam" id="3.30.70.150:FF:000001">
    <property type="entry name" value="Ribulose bisphosphate carboxylase large chain"/>
    <property type="match status" value="1"/>
</dbReference>
<dbReference type="Gene3D" id="3.20.20.110">
    <property type="entry name" value="Ribulose bisphosphate carboxylase, large subunit, C-terminal domain"/>
    <property type="match status" value="1"/>
</dbReference>
<dbReference type="Gene3D" id="3.30.70.150">
    <property type="entry name" value="RuBisCO large subunit, N-terminal domain"/>
    <property type="match status" value="1"/>
</dbReference>
<dbReference type="HAMAP" id="MF_01338">
    <property type="entry name" value="RuBisCO_L_type1"/>
    <property type="match status" value="1"/>
</dbReference>
<dbReference type="InterPro" id="IPR033966">
    <property type="entry name" value="RuBisCO"/>
</dbReference>
<dbReference type="InterPro" id="IPR020878">
    <property type="entry name" value="RuBisCo_large_chain_AS"/>
</dbReference>
<dbReference type="InterPro" id="IPR000685">
    <property type="entry name" value="RuBisCO_lsu_C"/>
</dbReference>
<dbReference type="InterPro" id="IPR036376">
    <property type="entry name" value="RuBisCO_lsu_C_sf"/>
</dbReference>
<dbReference type="InterPro" id="IPR017443">
    <property type="entry name" value="RuBisCO_lsu_fd_N"/>
</dbReference>
<dbReference type="InterPro" id="IPR036422">
    <property type="entry name" value="RuBisCO_lsu_N_sf"/>
</dbReference>
<dbReference type="InterPro" id="IPR020888">
    <property type="entry name" value="RuBisCO_lsuI"/>
</dbReference>
<dbReference type="NCBIfam" id="NF003252">
    <property type="entry name" value="PRK04208.1"/>
    <property type="match status" value="1"/>
</dbReference>
<dbReference type="PANTHER" id="PTHR42704">
    <property type="entry name" value="RIBULOSE BISPHOSPHATE CARBOXYLASE"/>
    <property type="match status" value="1"/>
</dbReference>
<dbReference type="PANTHER" id="PTHR42704:SF17">
    <property type="entry name" value="RIBULOSE BISPHOSPHATE CARBOXYLASE LARGE CHAIN"/>
    <property type="match status" value="1"/>
</dbReference>
<dbReference type="Pfam" id="PF00016">
    <property type="entry name" value="RuBisCO_large"/>
    <property type="match status" value="1"/>
</dbReference>
<dbReference type="Pfam" id="PF02788">
    <property type="entry name" value="RuBisCO_large_N"/>
    <property type="match status" value="1"/>
</dbReference>
<dbReference type="SFLD" id="SFLDG01052">
    <property type="entry name" value="RuBisCO"/>
    <property type="match status" value="1"/>
</dbReference>
<dbReference type="SFLD" id="SFLDS00014">
    <property type="entry name" value="RuBisCO"/>
    <property type="match status" value="1"/>
</dbReference>
<dbReference type="SFLD" id="SFLDG00301">
    <property type="entry name" value="RuBisCO-like_proteins"/>
    <property type="match status" value="1"/>
</dbReference>
<dbReference type="SUPFAM" id="SSF51649">
    <property type="entry name" value="RuBisCo, C-terminal domain"/>
    <property type="match status" value="1"/>
</dbReference>
<dbReference type="SUPFAM" id="SSF54966">
    <property type="entry name" value="RuBisCO, large subunit, small (N-terminal) domain"/>
    <property type="match status" value="1"/>
</dbReference>
<dbReference type="PROSITE" id="PS00157">
    <property type="entry name" value="RUBISCO_LARGE"/>
    <property type="match status" value="1"/>
</dbReference>
<name>RBL_CHAVU</name>
<accession>Q1ACK0</accession>
<protein>
    <recommendedName>
        <fullName evidence="1">Ribulose bisphosphate carboxylase large chain</fullName>
        <shortName evidence="1">RuBisCO large subunit</shortName>
        <ecNumber evidence="1">4.1.1.39</ecNumber>
    </recommendedName>
</protein>